<accession>B8ESH4</accession>
<keyword id="KW-0963">Cytoplasm</keyword>
<keyword id="KW-0275">Fatty acid biosynthesis</keyword>
<keyword id="KW-0276">Fatty acid metabolism</keyword>
<keyword id="KW-0444">Lipid biosynthesis</keyword>
<keyword id="KW-0443">Lipid metabolism</keyword>
<keyword id="KW-0596">Phosphopantetheine</keyword>
<keyword id="KW-0597">Phosphoprotein</keyword>
<keyword id="KW-1185">Reference proteome</keyword>
<reference key="1">
    <citation type="journal article" date="2010" name="J. Bacteriol.">
        <title>Complete genome sequence of the aerobic facultative methanotroph Methylocella silvestris BL2.</title>
        <authorList>
            <person name="Chen Y."/>
            <person name="Crombie A."/>
            <person name="Rahman M.T."/>
            <person name="Dedysh S.N."/>
            <person name="Liesack W."/>
            <person name="Stott M.B."/>
            <person name="Alam M."/>
            <person name="Theisen A.R."/>
            <person name="Murrell J.C."/>
            <person name="Dunfield P.F."/>
        </authorList>
    </citation>
    <scope>NUCLEOTIDE SEQUENCE [LARGE SCALE GENOMIC DNA]</scope>
    <source>
        <strain>DSM 15510 / CIP 108128 / LMG 27833 / NCIMB 13906 / BL2</strain>
    </source>
</reference>
<dbReference type="EMBL" id="CP001280">
    <property type="protein sequence ID" value="ACK49864.1"/>
    <property type="molecule type" value="Genomic_DNA"/>
</dbReference>
<dbReference type="RefSeq" id="WP_012589934.1">
    <property type="nucleotide sequence ID" value="NC_011666.1"/>
</dbReference>
<dbReference type="SMR" id="B8ESH4"/>
<dbReference type="STRING" id="395965.Msil_0894"/>
<dbReference type="KEGG" id="msl:Msil_0894"/>
<dbReference type="eggNOG" id="COG0236">
    <property type="taxonomic scope" value="Bacteria"/>
</dbReference>
<dbReference type="HOGENOM" id="CLU_108696_5_1_5"/>
<dbReference type="OrthoDB" id="9804551at2"/>
<dbReference type="UniPathway" id="UPA00094"/>
<dbReference type="Proteomes" id="UP000002257">
    <property type="component" value="Chromosome"/>
</dbReference>
<dbReference type="GO" id="GO:0005829">
    <property type="term" value="C:cytosol"/>
    <property type="evidence" value="ECO:0007669"/>
    <property type="project" value="TreeGrafter"/>
</dbReference>
<dbReference type="GO" id="GO:0016020">
    <property type="term" value="C:membrane"/>
    <property type="evidence" value="ECO:0007669"/>
    <property type="project" value="GOC"/>
</dbReference>
<dbReference type="GO" id="GO:0000035">
    <property type="term" value="F:acyl binding"/>
    <property type="evidence" value="ECO:0007669"/>
    <property type="project" value="TreeGrafter"/>
</dbReference>
<dbReference type="GO" id="GO:0000036">
    <property type="term" value="F:acyl carrier activity"/>
    <property type="evidence" value="ECO:0007669"/>
    <property type="project" value="UniProtKB-UniRule"/>
</dbReference>
<dbReference type="GO" id="GO:0031177">
    <property type="term" value="F:phosphopantetheine binding"/>
    <property type="evidence" value="ECO:0007669"/>
    <property type="project" value="InterPro"/>
</dbReference>
<dbReference type="GO" id="GO:0009245">
    <property type="term" value="P:lipid A biosynthetic process"/>
    <property type="evidence" value="ECO:0007669"/>
    <property type="project" value="TreeGrafter"/>
</dbReference>
<dbReference type="FunFam" id="1.10.1200.10:FF:000001">
    <property type="entry name" value="Acyl carrier protein"/>
    <property type="match status" value="1"/>
</dbReference>
<dbReference type="Gene3D" id="1.10.1200.10">
    <property type="entry name" value="ACP-like"/>
    <property type="match status" value="1"/>
</dbReference>
<dbReference type="HAMAP" id="MF_01217">
    <property type="entry name" value="Acyl_carrier"/>
    <property type="match status" value="1"/>
</dbReference>
<dbReference type="InterPro" id="IPR003231">
    <property type="entry name" value="ACP"/>
</dbReference>
<dbReference type="InterPro" id="IPR036736">
    <property type="entry name" value="ACP-like_sf"/>
</dbReference>
<dbReference type="InterPro" id="IPR020806">
    <property type="entry name" value="PKS_PP-bd"/>
</dbReference>
<dbReference type="InterPro" id="IPR009081">
    <property type="entry name" value="PP-bd_ACP"/>
</dbReference>
<dbReference type="InterPro" id="IPR006162">
    <property type="entry name" value="Ppantetheine_attach_site"/>
</dbReference>
<dbReference type="NCBIfam" id="TIGR00517">
    <property type="entry name" value="acyl_carrier"/>
    <property type="match status" value="1"/>
</dbReference>
<dbReference type="NCBIfam" id="NF002148">
    <property type="entry name" value="PRK00982.1-2"/>
    <property type="match status" value="1"/>
</dbReference>
<dbReference type="NCBIfam" id="NF002149">
    <property type="entry name" value="PRK00982.1-3"/>
    <property type="match status" value="1"/>
</dbReference>
<dbReference type="NCBIfam" id="NF002150">
    <property type="entry name" value="PRK00982.1-4"/>
    <property type="match status" value="1"/>
</dbReference>
<dbReference type="NCBIfam" id="NF002151">
    <property type="entry name" value="PRK00982.1-5"/>
    <property type="match status" value="1"/>
</dbReference>
<dbReference type="PANTHER" id="PTHR20863">
    <property type="entry name" value="ACYL CARRIER PROTEIN"/>
    <property type="match status" value="1"/>
</dbReference>
<dbReference type="PANTHER" id="PTHR20863:SF76">
    <property type="entry name" value="CARRIER DOMAIN-CONTAINING PROTEIN"/>
    <property type="match status" value="1"/>
</dbReference>
<dbReference type="Pfam" id="PF00550">
    <property type="entry name" value="PP-binding"/>
    <property type="match status" value="1"/>
</dbReference>
<dbReference type="SMART" id="SM00823">
    <property type="entry name" value="PKS_PP"/>
    <property type="match status" value="1"/>
</dbReference>
<dbReference type="SUPFAM" id="SSF47336">
    <property type="entry name" value="ACP-like"/>
    <property type="match status" value="1"/>
</dbReference>
<dbReference type="PROSITE" id="PS50075">
    <property type="entry name" value="CARRIER"/>
    <property type="match status" value="1"/>
</dbReference>
<dbReference type="PROSITE" id="PS00012">
    <property type="entry name" value="PHOSPHOPANTETHEINE"/>
    <property type="match status" value="1"/>
</dbReference>
<protein>
    <recommendedName>
        <fullName evidence="1">Acyl carrier protein</fullName>
        <shortName evidence="1">ACP</shortName>
    </recommendedName>
</protein>
<evidence type="ECO:0000255" key="1">
    <source>
        <dbReference type="HAMAP-Rule" id="MF_01217"/>
    </source>
</evidence>
<evidence type="ECO:0000255" key="2">
    <source>
        <dbReference type="PROSITE-ProRule" id="PRU00258"/>
    </source>
</evidence>
<gene>
    <name evidence="1" type="primary">acpP</name>
    <name type="ordered locus">Msil_0894</name>
</gene>
<organism>
    <name type="scientific">Methylocella silvestris (strain DSM 15510 / CIP 108128 / LMG 27833 / NCIMB 13906 / BL2)</name>
    <dbReference type="NCBI Taxonomy" id="395965"/>
    <lineage>
        <taxon>Bacteria</taxon>
        <taxon>Pseudomonadati</taxon>
        <taxon>Pseudomonadota</taxon>
        <taxon>Alphaproteobacteria</taxon>
        <taxon>Hyphomicrobiales</taxon>
        <taxon>Beijerinckiaceae</taxon>
        <taxon>Methylocella</taxon>
    </lineage>
</organism>
<sequence length="79" mass="8496">MSDVAERVKKIVIEHLGVDADKVVDNANFIEDLGADSLDTVELVMAFEEEFSVEIPDDAAETIVTVGDAVNFLEKATAA</sequence>
<feature type="chain" id="PRO_1000164793" description="Acyl carrier protein">
    <location>
        <begin position="1"/>
        <end position="79"/>
    </location>
</feature>
<feature type="domain" description="Carrier" evidence="2">
    <location>
        <begin position="2"/>
        <end position="77"/>
    </location>
</feature>
<feature type="modified residue" description="O-(pantetheine 4'-phosphoryl)serine" evidence="2">
    <location>
        <position position="37"/>
    </location>
</feature>
<proteinExistence type="inferred from homology"/>
<comment type="function">
    <text evidence="1">Carrier of the growing fatty acid chain in fatty acid biosynthesis.</text>
</comment>
<comment type="pathway">
    <text evidence="1">Lipid metabolism; fatty acid biosynthesis.</text>
</comment>
<comment type="subcellular location">
    <subcellularLocation>
        <location evidence="1">Cytoplasm</location>
    </subcellularLocation>
</comment>
<comment type="PTM">
    <text evidence="1">4'-phosphopantetheine is transferred from CoA to a specific serine of apo-ACP by AcpS. This modification is essential for activity because fatty acids are bound in thioester linkage to the sulfhydryl of the prosthetic group.</text>
</comment>
<comment type="similarity">
    <text evidence="1">Belongs to the acyl carrier protein (ACP) family.</text>
</comment>
<name>ACP_METSB</name>